<protein>
    <recommendedName>
        <fullName evidence="1">7-cyano-7-deazaguanine synthase</fullName>
        <ecNumber evidence="1">6.3.4.20</ecNumber>
    </recommendedName>
    <alternativeName>
        <fullName evidence="1">7-cyano-7-carbaguanine synthase</fullName>
    </alternativeName>
    <alternativeName>
        <fullName evidence="1">PreQ(0) synthase</fullName>
    </alternativeName>
    <alternativeName>
        <fullName evidence="1">Queuosine biosynthesis protein QueC</fullName>
    </alternativeName>
</protein>
<comment type="function">
    <text evidence="1">Catalyzes the ATP-dependent conversion of 7-carboxy-7-deazaguanine (CDG) to 7-cyano-7-deazaguanine (preQ(0)).</text>
</comment>
<comment type="catalytic activity">
    <reaction evidence="1">
        <text>7-carboxy-7-deazaguanine + NH4(+) + ATP = 7-cyano-7-deazaguanine + ADP + phosphate + H2O + H(+)</text>
        <dbReference type="Rhea" id="RHEA:27982"/>
        <dbReference type="ChEBI" id="CHEBI:15377"/>
        <dbReference type="ChEBI" id="CHEBI:15378"/>
        <dbReference type="ChEBI" id="CHEBI:28938"/>
        <dbReference type="ChEBI" id="CHEBI:30616"/>
        <dbReference type="ChEBI" id="CHEBI:43474"/>
        <dbReference type="ChEBI" id="CHEBI:45075"/>
        <dbReference type="ChEBI" id="CHEBI:61036"/>
        <dbReference type="ChEBI" id="CHEBI:456216"/>
        <dbReference type="EC" id="6.3.4.20"/>
    </reaction>
</comment>
<comment type="cofactor">
    <cofactor evidence="1">
        <name>Zn(2+)</name>
        <dbReference type="ChEBI" id="CHEBI:29105"/>
    </cofactor>
    <text evidence="1">Binds 1 zinc ion per subunit.</text>
</comment>
<comment type="pathway">
    <text evidence="1">Purine metabolism; 7-cyano-7-deazaguanine biosynthesis.</text>
</comment>
<comment type="similarity">
    <text evidence="1">Belongs to the QueC family.</text>
</comment>
<sequence length="232" mass="25807">MRRAVVVFSGGQDSTTCLIQAINQYDEVHCVTFDYGQRHRAEIDVARNVSHFLGVVAHKVLDVTLLNELALSSLTRDNIPVPDHSESEKSAIPSTFVPGRNILFLTLAAIYAYQVEAEAVITGVCETDFSGYPDCRDEFVKALNKAVSLGIARDIRFETPLMWLNKAETWALSDYYQHLDFVRSQTLTCYNGIQGNGCGTCAACHLRANGLEQYLNAPEKIMTEMKAKTHLV</sequence>
<evidence type="ECO:0000255" key="1">
    <source>
        <dbReference type="HAMAP-Rule" id="MF_01633"/>
    </source>
</evidence>
<proteinExistence type="inferred from homology"/>
<feature type="chain" id="PRO_0000246876" description="7-cyano-7-deazaguanine synthase">
    <location>
        <begin position="1"/>
        <end position="232"/>
    </location>
</feature>
<feature type="binding site" evidence="1">
    <location>
        <begin position="8"/>
        <end position="18"/>
    </location>
    <ligand>
        <name>ATP</name>
        <dbReference type="ChEBI" id="CHEBI:30616"/>
    </ligand>
</feature>
<feature type="binding site" evidence="1">
    <location>
        <position position="189"/>
    </location>
    <ligand>
        <name>Zn(2+)</name>
        <dbReference type="ChEBI" id="CHEBI:29105"/>
    </ligand>
</feature>
<feature type="binding site" evidence="1">
    <location>
        <position position="198"/>
    </location>
    <ligand>
        <name>Zn(2+)</name>
        <dbReference type="ChEBI" id="CHEBI:29105"/>
    </ligand>
</feature>
<feature type="binding site" evidence="1">
    <location>
        <position position="201"/>
    </location>
    <ligand>
        <name>Zn(2+)</name>
        <dbReference type="ChEBI" id="CHEBI:29105"/>
    </ligand>
</feature>
<feature type="binding site" evidence="1">
    <location>
        <position position="204"/>
    </location>
    <ligand>
        <name>Zn(2+)</name>
        <dbReference type="ChEBI" id="CHEBI:29105"/>
    </ligand>
</feature>
<reference key="1">
    <citation type="journal article" date="2003" name="Nat. Biotechnol.">
        <title>The genome sequence of the entomopathogenic bacterium Photorhabdus luminescens.</title>
        <authorList>
            <person name="Duchaud E."/>
            <person name="Rusniok C."/>
            <person name="Frangeul L."/>
            <person name="Buchrieser C."/>
            <person name="Givaudan A."/>
            <person name="Taourit S."/>
            <person name="Bocs S."/>
            <person name="Boursaux-Eude C."/>
            <person name="Chandler M."/>
            <person name="Charles J.-F."/>
            <person name="Dassa E."/>
            <person name="Derose R."/>
            <person name="Derzelle S."/>
            <person name="Freyssinet G."/>
            <person name="Gaudriault S."/>
            <person name="Medigue C."/>
            <person name="Lanois A."/>
            <person name="Powell K."/>
            <person name="Siguier P."/>
            <person name="Vincent R."/>
            <person name="Wingate V."/>
            <person name="Zouine M."/>
            <person name="Glaser P."/>
            <person name="Boemare N."/>
            <person name="Danchin A."/>
            <person name="Kunst F."/>
        </authorList>
    </citation>
    <scope>NUCLEOTIDE SEQUENCE [LARGE SCALE GENOMIC DNA]</scope>
    <source>
        <strain>DSM 15139 / CIP 105565 / TT01</strain>
    </source>
</reference>
<keyword id="KW-0067">ATP-binding</keyword>
<keyword id="KW-0436">Ligase</keyword>
<keyword id="KW-0479">Metal-binding</keyword>
<keyword id="KW-0547">Nucleotide-binding</keyword>
<keyword id="KW-0671">Queuosine biosynthesis</keyword>
<keyword id="KW-1185">Reference proteome</keyword>
<keyword id="KW-0862">Zinc</keyword>
<gene>
    <name evidence="1" type="primary">queC</name>
    <name type="ordered locus">plu3862</name>
</gene>
<name>QUEC_PHOLL</name>
<organism>
    <name type="scientific">Photorhabdus laumondii subsp. laumondii (strain DSM 15139 / CIP 105565 / TT01)</name>
    <name type="common">Photorhabdus luminescens subsp. laumondii</name>
    <dbReference type="NCBI Taxonomy" id="243265"/>
    <lineage>
        <taxon>Bacteria</taxon>
        <taxon>Pseudomonadati</taxon>
        <taxon>Pseudomonadota</taxon>
        <taxon>Gammaproteobacteria</taxon>
        <taxon>Enterobacterales</taxon>
        <taxon>Morganellaceae</taxon>
        <taxon>Photorhabdus</taxon>
    </lineage>
</organism>
<dbReference type="EC" id="6.3.4.20" evidence="1"/>
<dbReference type="EMBL" id="BX571872">
    <property type="protein sequence ID" value="CAE16234.1"/>
    <property type="molecule type" value="Genomic_DNA"/>
</dbReference>
<dbReference type="RefSeq" id="WP_011148001.1">
    <property type="nucleotide sequence ID" value="NC_005126.1"/>
</dbReference>
<dbReference type="SMR" id="Q7N0M0"/>
<dbReference type="STRING" id="243265.plu3862"/>
<dbReference type="GeneID" id="48850093"/>
<dbReference type="KEGG" id="plu:plu3862"/>
<dbReference type="eggNOG" id="COG0603">
    <property type="taxonomic scope" value="Bacteria"/>
</dbReference>
<dbReference type="HOGENOM" id="CLU_081854_0_0_6"/>
<dbReference type="OrthoDB" id="9789567at2"/>
<dbReference type="UniPathway" id="UPA00391"/>
<dbReference type="Proteomes" id="UP000002514">
    <property type="component" value="Chromosome"/>
</dbReference>
<dbReference type="GO" id="GO:0005524">
    <property type="term" value="F:ATP binding"/>
    <property type="evidence" value="ECO:0007669"/>
    <property type="project" value="UniProtKB-UniRule"/>
</dbReference>
<dbReference type="GO" id="GO:0016879">
    <property type="term" value="F:ligase activity, forming carbon-nitrogen bonds"/>
    <property type="evidence" value="ECO:0007669"/>
    <property type="project" value="UniProtKB-UniRule"/>
</dbReference>
<dbReference type="GO" id="GO:0008270">
    <property type="term" value="F:zinc ion binding"/>
    <property type="evidence" value="ECO:0007669"/>
    <property type="project" value="UniProtKB-UniRule"/>
</dbReference>
<dbReference type="GO" id="GO:0008616">
    <property type="term" value="P:queuosine biosynthetic process"/>
    <property type="evidence" value="ECO:0007669"/>
    <property type="project" value="UniProtKB-UniRule"/>
</dbReference>
<dbReference type="CDD" id="cd01995">
    <property type="entry name" value="QueC-like"/>
    <property type="match status" value="1"/>
</dbReference>
<dbReference type="FunFam" id="3.40.50.620:FF:000017">
    <property type="entry name" value="7-cyano-7-deazaguanine synthase"/>
    <property type="match status" value="1"/>
</dbReference>
<dbReference type="Gene3D" id="3.40.50.620">
    <property type="entry name" value="HUPs"/>
    <property type="match status" value="1"/>
</dbReference>
<dbReference type="HAMAP" id="MF_01633">
    <property type="entry name" value="QueC"/>
    <property type="match status" value="1"/>
</dbReference>
<dbReference type="InterPro" id="IPR018317">
    <property type="entry name" value="QueC"/>
</dbReference>
<dbReference type="InterPro" id="IPR014729">
    <property type="entry name" value="Rossmann-like_a/b/a_fold"/>
</dbReference>
<dbReference type="NCBIfam" id="TIGR00364">
    <property type="entry name" value="7-cyano-7-deazaguanine synthase QueC"/>
    <property type="match status" value="1"/>
</dbReference>
<dbReference type="NCBIfam" id="NF008317">
    <property type="entry name" value="PRK11106.1"/>
    <property type="match status" value="1"/>
</dbReference>
<dbReference type="PANTHER" id="PTHR42914">
    <property type="entry name" value="7-CYANO-7-DEAZAGUANINE SYNTHASE"/>
    <property type="match status" value="1"/>
</dbReference>
<dbReference type="PANTHER" id="PTHR42914:SF1">
    <property type="entry name" value="7-CYANO-7-DEAZAGUANINE SYNTHASE"/>
    <property type="match status" value="1"/>
</dbReference>
<dbReference type="Pfam" id="PF06508">
    <property type="entry name" value="QueC"/>
    <property type="match status" value="1"/>
</dbReference>
<dbReference type="PIRSF" id="PIRSF006293">
    <property type="entry name" value="ExsB"/>
    <property type="match status" value="1"/>
</dbReference>
<dbReference type="SUPFAM" id="SSF52402">
    <property type="entry name" value="Adenine nucleotide alpha hydrolases-like"/>
    <property type="match status" value="1"/>
</dbReference>
<accession>Q7N0M0</accession>